<proteinExistence type="evidence at protein level"/>
<name>PLCB4_HUMAN</name>
<feature type="initiator methionine" description="Removed" evidence="15">
    <location>
        <position position="1"/>
    </location>
</feature>
<feature type="chain" id="PRO_0000088495" description="1-phosphatidylinositol 4,5-bisphosphate phosphodiesterase beta-4">
    <location>
        <begin position="2"/>
        <end position="1175"/>
    </location>
</feature>
<feature type="domain" description="PI-PLC X-box" evidence="3">
    <location>
        <begin position="313"/>
        <end position="463"/>
    </location>
</feature>
<feature type="domain" description="PI-PLC Y-box" evidence="4">
    <location>
        <begin position="565"/>
        <end position="681"/>
    </location>
</feature>
<feature type="domain" description="C2" evidence="2">
    <location>
        <begin position="684"/>
        <end position="809"/>
    </location>
</feature>
<feature type="region of interest" description="Disordered" evidence="5">
    <location>
        <begin position="482"/>
        <end position="511"/>
    </location>
</feature>
<feature type="region of interest" description="Disordered" evidence="5">
    <location>
        <begin position="863"/>
        <end position="895"/>
    </location>
</feature>
<feature type="region of interest" description="Disordered" evidence="5">
    <location>
        <begin position="1082"/>
        <end position="1110"/>
    </location>
</feature>
<feature type="compositionally biased region" description="Acidic residues" evidence="5">
    <location>
        <begin position="493"/>
        <end position="508"/>
    </location>
</feature>
<feature type="compositionally biased region" description="Polar residues" evidence="5">
    <location>
        <begin position="881"/>
        <end position="895"/>
    </location>
</feature>
<feature type="compositionally biased region" description="Polar residues" evidence="5">
    <location>
        <begin position="1085"/>
        <end position="1094"/>
    </location>
</feature>
<feature type="compositionally biased region" description="Basic and acidic residues" evidence="5">
    <location>
        <begin position="1095"/>
        <end position="1109"/>
    </location>
</feature>
<feature type="active site" evidence="3">
    <location>
        <position position="328"/>
    </location>
</feature>
<feature type="active site" evidence="3">
    <location>
        <position position="375"/>
    </location>
</feature>
<feature type="modified residue" description="N-acetylalanine" evidence="15">
    <location>
        <position position="2"/>
    </location>
</feature>
<feature type="modified residue" description="Phosphothreonine" evidence="19">
    <location>
        <position position="886"/>
    </location>
</feature>
<feature type="splice variant" id="VSP_004721" description="In isoform 1." evidence="16">
    <location>
        <begin position="1"/>
        <end position="153"/>
    </location>
</feature>
<feature type="splice variant" id="VSP_004722" description="In isoform 1." evidence="16">
    <original>LAFMTNTNGKIPVR</original>
    <variation>MNNNWNVCFFLFCP</variation>
    <location>
        <begin position="154"/>
        <end position="167"/>
    </location>
</feature>
<feature type="splice variant" id="VSP_055182" description="In isoform 4." evidence="17">
    <original>V</original>
    <variation>VKKASDDLEHENN</variation>
    <location>
        <position position="535"/>
    </location>
</feature>
<feature type="splice variant" id="VSP_037818" description="In isoform 3." evidence="17">
    <original>AKEMQQMVKLEAEMDRRPATVV</original>
    <variation>LLKSCHAVSQTQGEGDAADGEIGSRDGPQTSNSSMKLQNAN</variation>
    <location>
        <begin position="1154"/>
        <end position="1175"/>
    </location>
</feature>
<feature type="sequence variant" id="VAR_056694" description="In dbSNP:rs6077510." evidence="6">
    <original>A</original>
    <variation>T</variation>
    <location>
        <position position="21"/>
    </location>
</feature>
<feature type="sequence variant" id="VAR_088767" description="In ARCND2A; likely pathogenic." evidence="11">
    <original>H</original>
    <variation>R</variation>
    <location>
        <position position="328"/>
    </location>
</feature>
<feature type="sequence variant" id="VAR_068559" description="In ARCND2A; likely pathogenic; dbSNP:rs387907179." evidence="7">
    <original>N</original>
    <variation>T</variation>
    <location>
        <position position="329"/>
    </location>
</feature>
<feature type="sequence variant" id="VAR_088768" description="In ARCND2A; uncertain significance." evidence="13">
    <original>G</original>
    <variation>R</variation>
    <location>
        <position position="339"/>
    </location>
</feature>
<feature type="sequence variant" id="VAR_088769" description="In ARCND2A; likely pathogenic." evidence="11">
    <original>E</original>
    <variation>Q</variation>
    <location>
        <position position="358"/>
    </location>
</feature>
<feature type="sequence variant" id="VAR_088770" description="In ARCND2A; likely pathogenic; decreased function in phospholipase C-activating endothelin receptor signaling pathway; dominant negative effect; no effect on localization to cell membrane." evidence="8 14">
    <original>E</original>
    <variation>V</variation>
    <location>
        <position position="358"/>
    </location>
</feature>
<feature type="sequence variant" id="VAR_088771" description="In ARCND2A; likely pathogenic." evidence="8">
    <original>D</original>
    <variation>N</variation>
    <location>
        <position position="360"/>
    </location>
</feature>
<feature type="sequence variant" id="VAR_088772" description="In ARCND2A; likely pathogenic; decreased function in phospholipase C-activating endothelin receptor signaling pathway; dominant negative effect; no effect on localization to cell membrane." evidence="8 14">
    <original>D</original>
    <variation>V</variation>
    <location>
        <position position="360"/>
    </location>
</feature>
<feature type="sequence variant" id="VAR_088773" description="In ARCND2A; uncertain significance." evidence="13">
    <original>I</original>
    <variation>F</variation>
    <location>
        <position position="569"/>
    </location>
</feature>
<feature type="sequence variant" id="VAR_068560" description="In ARCND2A; pathogenic; dbSNP:rs397514482." evidence="7 8 13">
    <original>R</original>
    <variation>C</variation>
    <location>
        <position position="621"/>
    </location>
</feature>
<feature type="sequence variant" id="VAR_068561" description="In ARCND2A; pathogenic; decreased function in phospholipase C-activating endothelin receptor signaling pathway; dominant negative effect; no effect on localization to cell membrane; dbSNP:rs397514481." evidence="7 8 12 13 14">
    <original>R</original>
    <variation>H</variation>
    <location>
        <position position="621"/>
    </location>
</feature>
<feature type="sequence variant" id="VAR_088774" description="In ARCND2A; likely pathogenic." evidence="8">
    <original>R</original>
    <variation>L</variation>
    <location>
        <position position="621"/>
    </location>
</feature>
<feature type="sequence variant" id="VAR_068562" description="In ARCND2A; likely pathogenic; decreased function in phospholipase C-activating endothelin receptor signaling pathway; dominant negative effect; no effect on localization to cell membrane; dbSNP:rs397514480." evidence="7 14">
    <original>Y</original>
    <variation>C</variation>
    <location>
        <position position="623"/>
    </location>
</feature>
<feature type="sequence variant" id="VAR_068563" description="In ARCND2A; likely pathogenic; dbSNP:rs397514483." evidence="7">
    <original>N</original>
    <variation>H</variation>
    <location>
        <position position="650"/>
    </location>
</feature>
<feature type="sequence variant" id="VAR_056695" description="In dbSNP:rs6118603.">
    <original>G</original>
    <variation>S</variation>
    <location>
        <position position="710"/>
    </location>
</feature>
<feature type="sequence conflict" description="In Ref. 1; AAB02027." evidence="17" ref="1">
    <original>A</original>
    <variation>P</variation>
    <location>
        <position position="447"/>
    </location>
</feature>
<feature type="sequence conflict" description="In Ref. 1; AAB02027." evidence="17" ref="1">
    <original>F</original>
    <variation>L</variation>
    <location>
        <position position="757"/>
    </location>
</feature>
<feature type="sequence conflict" description="In Ref. 1; AAB02027." evidence="17" ref="1">
    <original>L</original>
    <variation>P</variation>
    <location>
        <position position="787"/>
    </location>
</feature>
<feature type="sequence conflict" description="In Ref. 1; AAB02027." evidence="17" ref="1">
    <original>K</original>
    <variation>T</variation>
    <location>
        <position position="840"/>
    </location>
</feature>
<feature type="sequence conflict" description="In Ref. 1; AAB02027." evidence="17" ref="1">
    <original>A</original>
    <variation>P</variation>
    <location>
        <position position="902"/>
    </location>
</feature>
<sequence length="1175" mass="134464">MAKPYEFNWQKEVPSFLQEGAVFDRYEEESFVFEPNCLFKVDEFGFFLTWRSEGKEGQVLECSLINSIRSGAIPKDPKILAALEAVGKSENDLEGRIVCVCSGTDLVNISFTYMVAENPEVTKQWVEGLRSIIHNFRANNVSPMTCLKKHWMKLAFMTNTNGKIPVRSITRTFASGKTEKVIFQALKELGLPSGKNDEIEPTAFSYEKFYELTQKICPRTDIEDLFKKINGDKTDYLTVDQLVSFLNEHQRDPRLNEILFPFYDAKRAMQIIEMYEPDEDLKKKGLISSDGFCRYLMSDENAPVFLDRLELYQEMDHPLAHYFISSSHNTYLTGRQFGGKSSVEMYRQVLLAGCRCVELDCWDGKGEDQEPIITHGKAMCTDILFKDVIQAIKETAFVTSEYPVILSFENHCSKYQQYKMSKYCEDLFGDLLLKQALESHPLEPGRALPSPNDLKRKILIKNKRLKPEVEKKQLEALRSMMEAGESASPANILEDDNEEEIESADQEEEAHPEFKFGNELSADDLGHKEAVANSVKKGLVTVEDEQAWMASYKYVGATTNIHPYLSTMINYAQPVKFQGFHVAEERNIHYNMSSFNESVGLGYLKTHAIEFVNYNKRQMSRIYPKGGRVDSSNYMPQIFWNAGCQMVSLNYQTPDLAMQLNQGKFEYNGSCGYLLKPDFMRRPDRTFDPFSETPVDGVIAATCSVQVISGQFLSDKKIGTYVEVDMYGLPTDTIRKEFRTRMVMNNGLNPVYNEESFVFRKVILPDLAVLRIAVYDDNNKLIGQRILPLDGLQAGYRHISLRNEGNKPLSLPTIFCNIVLKTYVPDGFGDIVDALSDPKKFLSITEKRADQMRAMGIETSDIADVPSDTSKNDKKGKANTAKANVTPQSSSELRPTTTAALASGVEAKKGIELIPQVRIEDLKQMKAYLKHLKKQQKELNSLKKKHAKEHSTMQKLHCTQVDKIVAQYDKEKSTHEKILEKAMKKKGGSNCLEMKKETEIKIQTLTSDHKSKVKEIVAQHTKEWSEMINTHSAEEQEIRDLHLSQQCELLKKLLINAHEQQTQQLKLSHDRESKEMRAHQAKISMENSKAISQDKSIKNKAERERRVRELNSSNTKKFLEERKRLAMKQSKEMDQLKKVQLEHLEFLEKQNEQAKEMQQMVKLEAEMDRRPATVV</sequence>
<reference key="1">
    <citation type="journal article" date="1995" name="Genomics">
        <title>cDNA sequence and gene locus of the human retinal phosphoinositide-specific phospholipase-C beta 4 (PLCB4).</title>
        <authorList>
            <person name="Alvarez R.A."/>
            <person name="Ghalayini A.J."/>
            <person name="Xu P."/>
            <person name="Hardcastle A."/>
            <person name="Bhattacharya S."/>
            <person name="Rao P.N."/>
            <person name="Pettenati M.J."/>
            <person name="Anderson R.E."/>
            <person name="Baehr W."/>
        </authorList>
    </citation>
    <scope>NUCLEOTIDE SEQUENCE [MRNA] (ISOFORM 1)</scope>
    <source>
        <tissue>Retina</tissue>
    </source>
</reference>
<reference key="2">
    <citation type="journal article" date="2001" name="Nature">
        <title>The DNA sequence and comparative analysis of human chromosome 20.</title>
        <authorList>
            <person name="Deloukas P."/>
            <person name="Matthews L.H."/>
            <person name="Ashurst J.L."/>
            <person name="Burton J."/>
            <person name="Gilbert J.G.R."/>
            <person name="Jones M."/>
            <person name="Stavrides G."/>
            <person name="Almeida J.P."/>
            <person name="Babbage A.K."/>
            <person name="Bagguley C.L."/>
            <person name="Bailey J."/>
            <person name="Barlow K.F."/>
            <person name="Bates K.N."/>
            <person name="Beard L.M."/>
            <person name="Beare D.M."/>
            <person name="Beasley O.P."/>
            <person name="Bird C.P."/>
            <person name="Blakey S.E."/>
            <person name="Bridgeman A.M."/>
            <person name="Brown A.J."/>
            <person name="Buck D."/>
            <person name="Burrill W.D."/>
            <person name="Butler A.P."/>
            <person name="Carder C."/>
            <person name="Carter N.P."/>
            <person name="Chapman J.C."/>
            <person name="Clamp M."/>
            <person name="Clark G."/>
            <person name="Clark L.N."/>
            <person name="Clark S.Y."/>
            <person name="Clee C.M."/>
            <person name="Clegg S."/>
            <person name="Cobley V.E."/>
            <person name="Collier R.E."/>
            <person name="Connor R.E."/>
            <person name="Corby N.R."/>
            <person name="Coulson A."/>
            <person name="Coville G.J."/>
            <person name="Deadman R."/>
            <person name="Dhami P.D."/>
            <person name="Dunn M."/>
            <person name="Ellington A.G."/>
            <person name="Frankland J.A."/>
            <person name="Fraser A."/>
            <person name="French L."/>
            <person name="Garner P."/>
            <person name="Grafham D.V."/>
            <person name="Griffiths C."/>
            <person name="Griffiths M.N.D."/>
            <person name="Gwilliam R."/>
            <person name="Hall R.E."/>
            <person name="Hammond S."/>
            <person name="Harley J.L."/>
            <person name="Heath P.D."/>
            <person name="Ho S."/>
            <person name="Holden J.L."/>
            <person name="Howden P.J."/>
            <person name="Huckle E."/>
            <person name="Hunt A.R."/>
            <person name="Hunt S.E."/>
            <person name="Jekosch K."/>
            <person name="Johnson C.M."/>
            <person name="Johnson D."/>
            <person name="Kay M.P."/>
            <person name="Kimberley A.M."/>
            <person name="King A."/>
            <person name="Knights A."/>
            <person name="Laird G.K."/>
            <person name="Lawlor S."/>
            <person name="Lehvaeslaiho M.H."/>
            <person name="Leversha M.A."/>
            <person name="Lloyd C."/>
            <person name="Lloyd D.M."/>
            <person name="Lovell J.D."/>
            <person name="Marsh V.L."/>
            <person name="Martin S.L."/>
            <person name="McConnachie L.J."/>
            <person name="McLay K."/>
            <person name="McMurray A.A."/>
            <person name="Milne S.A."/>
            <person name="Mistry D."/>
            <person name="Moore M.J.F."/>
            <person name="Mullikin J.C."/>
            <person name="Nickerson T."/>
            <person name="Oliver K."/>
            <person name="Parker A."/>
            <person name="Patel R."/>
            <person name="Pearce T.A.V."/>
            <person name="Peck A.I."/>
            <person name="Phillimore B.J.C.T."/>
            <person name="Prathalingam S.R."/>
            <person name="Plumb R.W."/>
            <person name="Ramsay H."/>
            <person name="Rice C.M."/>
            <person name="Ross M.T."/>
            <person name="Scott C.E."/>
            <person name="Sehra H.K."/>
            <person name="Shownkeen R."/>
            <person name="Sims S."/>
            <person name="Skuce C.D."/>
            <person name="Smith M.L."/>
            <person name="Soderlund C."/>
            <person name="Steward C.A."/>
            <person name="Sulston J.E."/>
            <person name="Swann R.M."/>
            <person name="Sycamore N."/>
            <person name="Taylor R."/>
            <person name="Tee L."/>
            <person name="Thomas D.W."/>
            <person name="Thorpe A."/>
            <person name="Tracey A."/>
            <person name="Tromans A.C."/>
            <person name="Vaudin M."/>
            <person name="Wall M."/>
            <person name="Wallis J.M."/>
            <person name="Whitehead S.L."/>
            <person name="Whittaker P."/>
            <person name="Willey D.L."/>
            <person name="Williams L."/>
            <person name="Williams S.A."/>
            <person name="Wilming L."/>
            <person name="Wray P.W."/>
            <person name="Hubbard T."/>
            <person name="Durbin R.M."/>
            <person name="Bentley D.R."/>
            <person name="Beck S."/>
            <person name="Rogers J."/>
        </authorList>
    </citation>
    <scope>NUCLEOTIDE SEQUENCE [LARGE SCALE GENOMIC DNA]</scope>
</reference>
<reference key="3">
    <citation type="journal article" date="2004" name="Genome Res.">
        <title>The status, quality, and expansion of the NIH full-length cDNA project: the Mammalian Gene Collection (MGC).</title>
        <authorList>
            <consortium name="The MGC Project Team"/>
        </authorList>
    </citation>
    <scope>NUCLEOTIDE SEQUENCE [LARGE SCALE MRNA] (ISOFORM 2)</scope>
    <scope>VARIANT THR-21</scope>
    <source>
        <tissue>Brain</tissue>
    </source>
</reference>
<reference key="4">
    <citation type="submission" date="2008-12" db="UniProtKB">
        <authorList>
            <person name="Bienvenut W.V."/>
            <person name="Lilla S."/>
            <person name="von Kriegsheim A."/>
            <person name="Lempens A."/>
            <person name="Kolch W."/>
        </authorList>
    </citation>
    <scope>PROTEIN SEQUENCE OF 2-11; 79-88; 154-163; 181-195; 220-227; 255-266; 366-377; 435-455; 516-528; 577-586; 606-717; 762-780; 786-797; 822-847; 854-871; 883-908; 910-918; 1023-1039 AND 1139-1149</scope>
    <scope>CLEAVAGE OF INITIATOR METHIONINE</scope>
    <scope>ACETYLATION AT ALA-2</scope>
    <scope>IDENTIFICATION BY MASS SPECTROMETRY</scope>
    <source>
        <tissue>Ovarian carcinoma</tissue>
    </source>
</reference>
<reference key="5">
    <citation type="journal article" date="2011" name="Sci. Signal.">
        <title>System-wide temporal characterization of the proteome and phosphoproteome of human embryonic stem cell differentiation.</title>
        <authorList>
            <person name="Rigbolt K.T."/>
            <person name="Prokhorova T.A."/>
            <person name="Akimov V."/>
            <person name="Henningsen J."/>
            <person name="Johansen P.T."/>
            <person name="Kratchmarova I."/>
            <person name="Kassem M."/>
            <person name="Mann M."/>
            <person name="Olsen J.V."/>
            <person name="Blagoev B."/>
        </authorList>
    </citation>
    <scope>PHOSPHORYLATION [LARGE SCALE ANALYSIS] AT THR-886</scope>
    <scope>IDENTIFICATION BY MASS SPECTROMETRY [LARGE SCALE ANALYSIS]</scope>
</reference>
<reference key="6">
    <citation type="journal article" date="2012" name="Am. J. Hum. Genet.">
        <title>A human homeotic transformation resulting from mutations in PLCB4 and GNAI3 causes auriculocondylar syndrome.</title>
        <authorList>
            <person name="Rieder M.J."/>
            <person name="Green G.E."/>
            <person name="Park S.S."/>
            <person name="Stamper B.D."/>
            <person name="Gordon C.T."/>
            <person name="Johnson J.M."/>
            <person name="Cunniff C.M."/>
            <person name="Smith J.D."/>
            <person name="Emery S.B."/>
            <person name="Lyonnet S."/>
            <person name="Amiel J."/>
            <person name="Holder M."/>
            <person name="Heggie A.A."/>
            <person name="Bamshad M.J."/>
            <person name="Nickerson D.A."/>
            <person name="Cox T.C."/>
            <person name="Hing A.V."/>
            <person name="Horst J.A."/>
            <person name="Cunningham M.L."/>
        </authorList>
    </citation>
    <scope>VARIANTS ARCND2A THR-329; HIS-621; CYS-621; CYS-623 AND HIS-650</scope>
</reference>
<reference key="7">
    <citation type="journal article" date="2012" name="Am. J. Hum. Genet.">
        <authorList>
            <person name="Rieder M.J."/>
            <person name="Green G.E."/>
            <person name="Park S.S."/>
            <person name="Stamper B.D."/>
            <person name="Gordon C.T."/>
            <person name="Johnson J.M."/>
            <person name="Cunniff C.M."/>
            <person name="Smith J.D."/>
            <person name="Emery S.B."/>
            <person name="Lyonnet S."/>
            <person name="Amiel J."/>
            <person name="Holder M."/>
            <person name="Heggie A.A."/>
            <person name="Bamshad M.J."/>
            <person name="Nickerson D.A."/>
            <person name="Cox T.C."/>
            <person name="Hing A.V."/>
            <person name="Horst J.A."/>
            <person name="Cunningham M.L."/>
        </authorList>
    </citation>
    <scope>ERRATUM OF PUBMED:22560091</scope>
</reference>
<reference key="8">
    <citation type="journal article" date="2013" name="Am. J. Med. Genet. A">
        <title>Further characterization of atypical features in auriculocondylar syndrome caused by recessive PLCB4 mutations.</title>
        <authorList>
            <person name="Kido Y."/>
            <person name="Gordon C.T."/>
            <person name="Sakazume S."/>
            <person name="Ben Bdira E."/>
            <person name="Dattani M."/>
            <person name="Wilson L.C."/>
            <person name="Lyonnet S."/>
            <person name="Murakami N."/>
            <person name="Cunningham M.L."/>
            <person name="Amiel J."/>
            <person name="Nagai T."/>
        </authorList>
    </citation>
    <scope>INVOLVEMENT IN ARCND2B</scope>
</reference>
<reference key="9">
    <citation type="journal article" date="2013" name="J. Med. Genet.">
        <title>Heterogeneity of mutational mechanisms and modes of inheritance in auriculocondylar syndrome.</title>
        <authorList>
            <person name="Gordon C.T."/>
            <person name="Vuillot A."/>
            <person name="Marlin S."/>
            <person name="Gerkes E."/>
            <person name="Henderson A."/>
            <person name="Al-Kindy A."/>
            <person name="Holder-Espinasse M."/>
            <person name="Park S.S."/>
            <person name="Omarjee A."/>
            <person name="Sanchis-Borja M."/>
            <person name="Bdira E.B."/>
            <person name="Oufadem M."/>
            <person name="Sikkema-Raddatz B."/>
            <person name="Stewart A."/>
            <person name="Palmer R."/>
            <person name="McGowan R."/>
            <person name="Petit F."/>
            <person name="Delobel B."/>
            <person name="Speicher M.R."/>
            <person name="Aurora P."/>
            <person name="Kilner D."/>
            <person name="Pellerin P."/>
            <person name="Simon M."/>
            <person name="Bonnefont J.P."/>
            <person name="Tobias E.S."/>
            <person name="Garcia-Minaur S."/>
            <person name="Bitner-Glindzicz M."/>
            <person name="Lindholm P."/>
            <person name="Meijer B.A."/>
            <person name="Abadie V."/>
            <person name="Denoyelle F."/>
            <person name="Vazquez M.P."/>
            <person name="Rotky-Fast C."/>
            <person name="Couloigner V."/>
            <person name="Pierrot S."/>
            <person name="Manach Y."/>
            <person name="Breton S."/>
            <person name="Hendriks Y.M."/>
            <person name="Munnich A."/>
            <person name="Jakobsen L."/>
            <person name="Kroisel P."/>
            <person name="Lin A."/>
            <person name="Kaban L.B."/>
            <person name="Basel-Vanagaite L."/>
            <person name="Wilson L."/>
            <person name="Cunningham M.L."/>
            <person name="Lyonnet S."/>
            <person name="Amiel J."/>
        </authorList>
    </citation>
    <scope>VARIANTS ARCND2A VAL-358; ASN-360; VAL-360; CYS-621; LEU-621 AND HIS-621</scope>
    <scope>INVOLVEMENT IN ARCND2A</scope>
    <scope>INVOLVEMENT IN ARCND2B</scope>
</reference>
<reference key="10">
    <citation type="journal article" date="2016" name="Am. J. Med. Genet. A">
        <title>Respiratory and gastrointestinal dysfunctions associated with auriculo-condylar syndrome and a homozygous PLCB4 loss-of-function mutation.</title>
        <authorList>
            <person name="Leoni C."/>
            <person name="Gordon C.T."/>
            <person name="Della Marca G."/>
            <person name="Giorgio V."/>
            <person name="Onesimo R."/>
            <person name="Perrino F."/>
            <person name="Cianfoni A."/>
            <person name="Cerchiari A."/>
            <person name="Amiel J."/>
            <person name="Zampino G."/>
        </authorList>
    </citation>
    <scope>INVOLVEMENT IN ARCND2B</scope>
</reference>
<reference key="11">
    <citation type="journal article" date="2017" name="Am. J. Med. Genet. A">
        <title>Targeted molecular investigation in patients within the clinical spectrum of Auriculocondylar syndrome.</title>
        <authorList>
            <person name="Romanelli Tavares V.L."/>
            <person name="Zechi-Ceide R.M."/>
            <person name="Bertola D.R."/>
            <person name="Gordon C.T."/>
            <person name="Ferreira S.G."/>
            <person name="Hsia G.S."/>
            <person name="Yamamoto G.L."/>
            <person name="Ezquina S.A."/>
            <person name="Kokitsu-Nakata N.M."/>
            <person name="Vendramini-Pittoli S."/>
            <person name="Freitas R.S."/>
            <person name="Souza J."/>
            <person name="Raposo-Amaral C.A."/>
            <person name="Zatz M."/>
            <person name="Amiel J."/>
            <person name="Guion-Almeida M.L."/>
            <person name="Passos-Bueno M.R."/>
        </authorList>
    </citation>
    <scope>VARIANTS ARCND2A ARG-328 AND GLN-358</scope>
</reference>
<reference key="12">
    <citation type="journal article" date="2020" name="Eur. J. Med. Genet.">
        <title>A familial PLCB4 mutation causing auriculocondylar syndrome 2 with variable severity.</title>
        <authorList>
            <person name="Nabil A."/>
            <person name="El Shafei S."/>
            <person name="El Shakankiri N.M."/>
            <person name="Habib A."/>
            <person name="Morsy H."/>
            <person name="Maddirevula S."/>
            <person name="Alkuraya F.S."/>
        </authorList>
    </citation>
    <scope>VARIANT ARCND2A HIS-621</scope>
</reference>
<reference key="13">
    <citation type="journal article" date="2022" name="Dis. Model. Mech.">
        <title>Auriculocondylar syndrome 2 results from the dominant-negative action of PLCB4 variants.</title>
        <authorList>
            <person name="Kanai S.M."/>
            <person name="Heffner C."/>
            <person name="Cox T.C."/>
            <person name="Cunningham M.L."/>
            <person name="Perez F.A."/>
            <person name="Bauer A.M."/>
            <person name="Reigan P."/>
            <person name="Carter C."/>
            <person name="Murray S.A."/>
            <person name="Clouthier D.E."/>
        </authorList>
    </citation>
    <scope>CHARACTERIZATION OF VARIANTS ARCND2A VAL-358; VAL-360; HIS-621 AND CYS-623</scope>
    <scope>FUNCTION</scope>
    <scope>SUBCELLULAR LOCATION</scope>
</reference>
<reference key="14">
    <citation type="journal article" date="2022" name="Hum. Mutat.">
        <title>Further delineation of auriculocondylar syndrome based on 14 novel cases and reassessment of 25 published cases.</title>
        <authorList>
            <person name="Vegas N."/>
            <person name="Demir Z."/>
            <person name="Gordon C.T."/>
            <person name="Breton S."/>
            <person name="Romanelli Tavares V.L."/>
            <person name="Moisset H."/>
            <person name="Zechi-Ceide R."/>
            <person name="Kokitsu-Nakata N.M."/>
            <person name="Kido Y."/>
            <person name="Marlin S."/>
            <person name="Gherbi Halem S."/>
            <person name="Meerschaut I."/>
            <person name="Callewaert B."/>
            <person name="Chung B."/>
            <person name="Revencu N."/>
            <person name="Lehalle D."/>
            <person name="Petit F."/>
            <person name="Propst E.J."/>
            <person name="Papsin B.C."/>
            <person name="Phillips J.H."/>
            <person name="Jakobsen L."/>
            <person name="Le Tanno P."/>
            <person name="Thevenon J."/>
            <person name="McGaughran J."/>
            <person name="Gerkes E.H."/>
            <person name="Leoni C."/>
            <person name="Kroisel P."/>
            <person name="Tan T.Y."/>
            <person name="Henderson A."/>
            <person name="Terhal P."/>
            <person name="Basel-Salmon L."/>
            <person name="Alkindy A."/>
            <person name="White S.M."/>
            <person name="Passos-Bueno M.R."/>
            <person name="Pingault V."/>
            <person name="De Pontual L."/>
            <person name="Amiel J."/>
        </authorList>
    </citation>
    <scope>VARIANTS ARCND2A ARG-339; PHE-569; CYS-621 AND HIS-621</scope>
    <scope>INVOLVEMENT IN ARCND2B</scope>
</reference>
<evidence type="ECO:0000250" key="1">
    <source>
        <dbReference type="UniProtKB" id="Q07722"/>
    </source>
</evidence>
<evidence type="ECO:0000255" key="2">
    <source>
        <dbReference type="PROSITE-ProRule" id="PRU00041"/>
    </source>
</evidence>
<evidence type="ECO:0000255" key="3">
    <source>
        <dbReference type="PROSITE-ProRule" id="PRU00270"/>
    </source>
</evidence>
<evidence type="ECO:0000255" key="4">
    <source>
        <dbReference type="PROSITE-ProRule" id="PRU00271"/>
    </source>
</evidence>
<evidence type="ECO:0000256" key="5">
    <source>
        <dbReference type="SAM" id="MobiDB-lite"/>
    </source>
</evidence>
<evidence type="ECO:0000269" key="6">
    <source>
    </source>
</evidence>
<evidence type="ECO:0000269" key="7">
    <source>
    </source>
</evidence>
<evidence type="ECO:0000269" key="8">
    <source>
    </source>
</evidence>
<evidence type="ECO:0000269" key="9">
    <source>
    </source>
</evidence>
<evidence type="ECO:0000269" key="10">
    <source>
    </source>
</evidence>
<evidence type="ECO:0000269" key="11">
    <source>
    </source>
</evidence>
<evidence type="ECO:0000269" key="12">
    <source>
    </source>
</evidence>
<evidence type="ECO:0000269" key="13">
    <source>
    </source>
</evidence>
<evidence type="ECO:0000269" key="14">
    <source>
    </source>
</evidence>
<evidence type="ECO:0000269" key="15">
    <source ref="4"/>
</evidence>
<evidence type="ECO:0000303" key="16">
    <source>
    </source>
</evidence>
<evidence type="ECO:0000305" key="17"/>
<evidence type="ECO:0000312" key="18">
    <source>
        <dbReference type="HGNC" id="HGNC:9059"/>
    </source>
</evidence>
<evidence type="ECO:0007744" key="19">
    <source>
    </source>
</evidence>
<gene>
    <name evidence="18" type="primary">PLCB4</name>
</gene>
<protein>
    <recommendedName>
        <fullName evidence="17">1-phosphatidylinositol 4,5-bisphosphate phosphodiesterase beta-4</fullName>
        <ecNumber evidence="1">3.1.4.11</ecNumber>
    </recommendedName>
    <alternativeName>
        <fullName>Phosphoinositide phospholipase C-beta-4</fullName>
    </alternativeName>
    <alternativeName>
        <fullName>Phospholipase C-beta-4</fullName>
        <shortName>PLC-beta-4</shortName>
    </alternativeName>
</protein>
<keyword id="KW-0007">Acetylation</keyword>
<keyword id="KW-0025">Alternative splicing</keyword>
<keyword id="KW-0106">Calcium</keyword>
<keyword id="KW-1003">Cell membrane</keyword>
<keyword id="KW-0903">Direct protein sequencing</keyword>
<keyword id="KW-0225">Disease variant</keyword>
<keyword id="KW-0378">Hydrolase</keyword>
<keyword id="KW-0442">Lipid degradation</keyword>
<keyword id="KW-0443">Lipid metabolism</keyword>
<keyword id="KW-0472">Membrane</keyword>
<keyword id="KW-0597">Phosphoprotein</keyword>
<keyword id="KW-1267">Proteomics identification</keyword>
<keyword id="KW-1185">Reference proteome</keyword>
<keyword id="KW-0807">Transducer</keyword>
<accession>Q15147</accession>
<accession>B7ZLK6</accession>
<accession>E2QRH8</accession>
<accession>Q17R56</accession>
<accession>Q5JYS8</accession>
<accession>Q5JYS9</accession>
<accession>Q5JYT0</accession>
<accession>Q5JYT3</accession>
<accession>Q5JYT4</accession>
<accession>Q9BQW5</accession>
<accession>Q9BQW6</accession>
<accession>Q9BQW8</accession>
<accession>Q9UJQ2</accession>
<comment type="function">
    <text evidence="1 14">Activated phosphatidylinositol-specific phospholipase C enzymes catalyze the production of the second messenger molecules diacylglycerol (DAG) and inositol 1,4,5-trisphosphate (IP3) involved in G-protein coupled receptor signaling pathways. PLCB4 is a direct effector of the endothelin receptor signaling pathway that plays an essential role in lower jaw and middle ear structures development (PubMed:35284927).</text>
</comment>
<comment type="catalytic activity">
    <reaction evidence="1">
        <text>a 1,2-diacyl-sn-glycero-3-phospho-(1D-myo-inositol-4,5-bisphosphate) + H2O = 1D-myo-inositol 1,4,5-trisphosphate + a 1,2-diacyl-sn-glycerol + H(+)</text>
        <dbReference type="Rhea" id="RHEA:33179"/>
        <dbReference type="ChEBI" id="CHEBI:15377"/>
        <dbReference type="ChEBI" id="CHEBI:15378"/>
        <dbReference type="ChEBI" id="CHEBI:17815"/>
        <dbReference type="ChEBI" id="CHEBI:58456"/>
        <dbReference type="ChEBI" id="CHEBI:203600"/>
        <dbReference type="EC" id="3.1.4.11"/>
    </reaction>
    <physiologicalReaction direction="left-to-right" evidence="1">
        <dbReference type="Rhea" id="RHEA:33180"/>
    </physiologicalReaction>
</comment>
<comment type="catalytic activity">
    <reaction evidence="1">
        <text>a 1,2-diacyl-sn-glycero-3-phospho-(1D-myo-inositol) + H2O = 1D-myo-inositol 1-phosphate + a 1,2-diacyl-sn-glycerol + H(+)</text>
        <dbReference type="Rhea" id="RHEA:43484"/>
        <dbReference type="ChEBI" id="CHEBI:15377"/>
        <dbReference type="ChEBI" id="CHEBI:15378"/>
        <dbReference type="ChEBI" id="CHEBI:17815"/>
        <dbReference type="ChEBI" id="CHEBI:57880"/>
        <dbReference type="ChEBI" id="CHEBI:58433"/>
    </reaction>
    <physiologicalReaction direction="left-to-right" evidence="1">
        <dbReference type="Rhea" id="RHEA:43485"/>
    </physiologicalReaction>
</comment>
<comment type="cofactor">
    <cofactor>
        <name>Ca(2+)</name>
        <dbReference type="ChEBI" id="CHEBI:29108"/>
    </cofactor>
</comment>
<comment type="interaction">
    <interactant intactId="EBI-998637">
        <id>Q15147</id>
    </interactant>
    <interactant intactId="EBI-16439278">
        <id>Q6FHY5</id>
        <label>MEOX2</label>
    </interactant>
    <organismsDiffer>false</organismsDiffer>
    <experiments>3</experiments>
</comment>
<comment type="interaction">
    <interactant intactId="EBI-998637">
        <id>Q15147</id>
    </interactant>
    <interactant intactId="EBI-307352">
        <id>Q04864</id>
        <label>REL</label>
    </interactant>
    <organismsDiffer>false</organismsDiffer>
    <experiments>3</experiments>
</comment>
<comment type="subcellular location">
    <subcellularLocation>
        <location evidence="14">Cell membrane</location>
    </subcellularLocation>
</comment>
<comment type="alternative products">
    <event type="alternative splicing"/>
    <isoform>
        <id>Q15147-1</id>
        <name>2</name>
        <sequence type="displayed"/>
    </isoform>
    <isoform>
        <id>Q15147-2</id>
        <name>1</name>
        <sequence type="described" ref="VSP_004721 VSP_004722"/>
    </isoform>
    <isoform>
        <id>Q15147-4</id>
        <name>3</name>
        <sequence type="described" ref="VSP_037818"/>
    </isoform>
    <isoform>
        <id>Q15147-5</id>
        <name>4</name>
        <sequence type="described" ref="VSP_055182"/>
    </isoform>
    <text>Additional isoforms seem to exist.</text>
</comment>
<comment type="tissue specificity">
    <text>Preferentially expressed in the retina.</text>
</comment>
<comment type="disease" evidence="7 8 11 12 13 14">
    <disease id="DI-03468">
        <name>Auriculocondylar syndrome 2A</name>
        <acronym>ARCND2A</acronym>
        <description>An autosomal dominant form of auriculocondylar syndrome, a craniofacial malformation syndrome characterized by variable mandibular anomalies, including mild to severe micrognathia, temporomandibular joint ankylosis, cleft palate, and a characteristic ear malformation that consists of separation of the lobule from the external ear, giving the appearance of a question mark (question-mark ear). Other frequently described features include prominent cheeks, cupped and posteriorly rotated ears, preauricular tags, and microstomia. Glossoptosis, masticatory abnormalities, orthodontic problems, and malocclusion occur in a majority of affected subjects.</description>
        <dbReference type="MIM" id="614669"/>
    </disease>
    <text>The disease is caused by variants affecting the gene represented in this entry.</text>
</comment>
<comment type="disease" evidence="8 9 10 13">
    <disease id="DI-06730">
        <name>Auriculocondylar syndrome 2B</name>
        <acronym>ARCND2B</acronym>
        <description>An autosomal recessive form of auriculocondylar syndrome, a craniofacial malformation syndrome characterized by variable mandibular anomalies, including mild to severe micrognathia, temporomandibular joint ankylosis, cleft palate, and a characteristic ear malformation that consists of separation of the lobule from the external ear, giving the appearance of a question mark (question-mark ear). Other frequently described features include prominent cheeks, cupped and posteriorly rotated ears, preauricular tags, and microstomia. Glossoptosis, masticatory abnormalities, orthodontic problems, and malocclusion occur in a majority of affected subjects.</description>
        <dbReference type="MIM" id="620458"/>
    </disease>
    <text>The disease is caused by variants affecting the gene represented in this entry.</text>
</comment>
<organism>
    <name type="scientific">Homo sapiens</name>
    <name type="common">Human</name>
    <dbReference type="NCBI Taxonomy" id="9606"/>
    <lineage>
        <taxon>Eukaryota</taxon>
        <taxon>Metazoa</taxon>
        <taxon>Chordata</taxon>
        <taxon>Craniata</taxon>
        <taxon>Vertebrata</taxon>
        <taxon>Euteleostomi</taxon>
        <taxon>Mammalia</taxon>
        <taxon>Eutheria</taxon>
        <taxon>Euarchontoglires</taxon>
        <taxon>Primates</taxon>
        <taxon>Haplorrhini</taxon>
        <taxon>Catarrhini</taxon>
        <taxon>Hominidae</taxon>
        <taxon>Homo</taxon>
    </lineage>
</organism>
<dbReference type="EC" id="3.1.4.11" evidence="1"/>
<dbReference type="EMBL" id="L41349">
    <property type="protein sequence ID" value="AAB02027.1"/>
    <property type="molecule type" value="mRNA"/>
</dbReference>
<dbReference type="EMBL" id="AL121898">
    <property type="status" value="NOT_ANNOTATED_CDS"/>
    <property type="molecule type" value="Genomic_DNA"/>
</dbReference>
<dbReference type="EMBL" id="AL121909">
    <property type="status" value="NOT_ANNOTATED_CDS"/>
    <property type="molecule type" value="Genomic_DNA"/>
</dbReference>
<dbReference type="EMBL" id="AL023805">
    <property type="status" value="NOT_ANNOTATED_CDS"/>
    <property type="molecule type" value="Genomic_DNA"/>
</dbReference>
<dbReference type="EMBL" id="AL031652">
    <property type="status" value="NOT_ANNOTATED_CDS"/>
    <property type="molecule type" value="Genomic_DNA"/>
</dbReference>
<dbReference type="EMBL" id="BC117458">
    <property type="protein sequence ID" value="AAI17459.1"/>
    <property type="molecule type" value="mRNA"/>
</dbReference>
<dbReference type="EMBL" id="BC143868">
    <property type="protein sequence ID" value="AAI43869.1"/>
    <property type="molecule type" value="mRNA"/>
</dbReference>
<dbReference type="CCDS" id="CCDS13104.1">
    <molecule id="Q15147-4"/>
</dbReference>
<dbReference type="CCDS" id="CCDS13105.1">
    <molecule id="Q15147-1"/>
</dbReference>
<dbReference type="CCDS" id="CCDS54447.1">
    <molecule id="Q15147-5"/>
</dbReference>
<dbReference type="RefSeq" id="NP_000924.3">
    <molecule id="Q15147-4"/>
    <property type="nucleotide sequence ID" value="NM_000933.3"/>
</dbReference>
<dbReference type="RefSeq" id="NP_001166117.1">
    <molecule id="Q15147-5"/>
    <property type="nucleotide sequence ID" value="NM_001172646.2"/>
</dbReference>
<dbReference type="RefSeq" id="NP_001364063.1">
    <molecule id="Q15147-4"/>
    <property type="nucleotide sequence ID" value="NM_001377134.2"/>
</dbReference>
<dbReference type="RefSeq" id="NP_001364064.1">
    <molecule id="Q15147-4"/>
    <property type="nucleotide sequence ID" value="NM_001377135.1"/>
</dbReference>
<dbReference type="RefSeq" id="NP_001364065.1">
    <molecule id="Q15147-1"/>
    <property type="nucleotide sequence ID" value="NM_001377136.1"/>
</dbReference>
<dbReference type="RefSeq" id="NP_877949.2">
    <molecule id="Q15147-1"/>
    <property type="nucleotide sequence ID" value="NM_182797.3"/>
</dbReference>
<dbReference type="RefSeq" id="XP_016883369.1">
    <property type="nucleotide sequence ID" value="XM_017027880.1"/>
</dbReference>
<dbReference type="RefSeq" id="XP_016883370.1">
    <property type="nucleotide sequence ID" value="XM_017027881.1"/>
</dbReference>
<dbReference type="RefSeq" id="XP_047296158.1">
    <molecule id="Q15147-4"/>
    <property type="nucleotide sequence ID" value="XM_047440202.1"/>
</dbReference>
<dbReference type="SMR" id="Q15147"/>
<dbReference type="BioGRID" id="111348">
    <property type="interactions" value="31"/>
</dbReference>
<dbReference type="DIP" id="DIP-36735N"/>
<dbReference type="FunCoup" id="Q15147">
    <property type="interactions" value="2311"/>
</dbReference>
<dbReference type="IntAct" id="Q15147">
    <property type="interactions" value="7"/>
</dbReference>
<dbReference type="STRING" id="9606.ENSP00000367762"/>
<dbReference type="GlyGen" id="Q15147">
    <property type="glycosylation" value="1 site, 1 O-linked glycan (1 site)"/>
</dbReference>
<dbReference type="iPTMnet" id="Q15147"/>
<dbReference type="PhosphoSitePlus" id="Q15147"/>
<dbReference type="SwissPalm" id="Q15147"/>
<dbReference type="BioMuta" id="PLCB4"/>
<dbReference type="jPOST" id="Q15147"/>
<dbReference type="MassIVE" id="Q15147"/>
<dbReference type="PaxDb" id="9606-ENSP00000367762"/>
<dbReference type="PeptideAtlas" id="Q15147"/>
<dbReference type="ProteomicsDB" id="15257"/>
<dbReference type="ProteomicsDB" id="60459">
    <molecule id="Q15147-1"/>
</dbReference>
<dbReference type="ProteomicsDB" id="60460">
    <molecule id="Q15147-2"/>
</dbReference>
<dbReference type="ProteomicsDB" id="60461">
    <molecule id="Q15147-4"/>
</dbReference>
<dbReference type="ProteomicsDB" id="63514"/>
<dbReference type="Pumba" id="Q15147"/>
<dbReference type="Antibodypedia" id="24070">
    <property type="antibodies" value="38 antibodies from 16 providers"/>
</dbReference>
<dbReference type="DNASU" id="5332"/>
<dbReference type="Ensembl" id="ENST00000378493.6">
    <molecule id="Q15147-1"/>
    <property type="protein sequence ID" value="ENSP00000367754.1"/>
    <property type="gene ID" value="ENSG00000101333.19"/>
</dbReference>
<dbReference type="Ensembl" id="ENST00000378501.3">
    <molecule id="Q15147-4"/>
    <property type="protein sequence ID" value="ENSP00000367762.2"/>
    <property type="gene ID" value="ENSG00000101333.19"/>
</dbReference>
<dbReference type="Ensembl" id="ENST00000685110.1">
    <molecule id="Q15147-1"/>
    <property type="protein sequence ID" value="ENSP00000510632.1"/>
    <property type="gene ID" value="ENSG00000101333.19"/>
</dbReference>
<dbReference type="Ensembl" id="ENST00000685310.1">
    <molecule id="Q15147-1"/>
    <property type="protein sequence ID" value="ENSP00000510124.1"/>
    <property type="gene ID" value="ENSG00000101333.19"/>
</dbReference>
<dbReference type="Ensembl" id="ENST00000685823.1">
    <molecule id="Q15147-5"/>
    <property type="protein sequence ID" value="ENSP00000508676.1"/>
    <property type="gene ID" value="ENSG00000101333.19"/>
</dbReference>
<dbReference type="Ensembl" id="ENST00000685859.1">
    <molecule id="Q15147-1"/>
    <property type="protein sequence ID" value="ENSP00000510302.1"/>
    <property type="gene ID" value="ENSG00000101333.19"/>
</dbReference>
<dbReference type="Ensembl" id="ENST00000686313.1">
    <molecule id="Q15147-4"/>
    <property type="protein sequence ID" value="ENSP00000508595.1"/>
    <property type="gene ID" value="ENSG00000101333.19"/>
</dbReference>
<dbReference type="Ensembl" id="ENST00000686871.1">
    <molecule id="Q15147-4"/>
    <property type="protein sequence ID" value="ENSP00000510118.1"/>
    <property type="gene ID" value="ENSG00000101333.19"/>
</dbReference>
<dbReference type="Ensembl" id="ENST00000686976.1">
    <molecule id="Q15147-4"/>
    <property type="protein sequence ID" value="ENSP00000508600.1"/>
    <property type="gene ID" value="ENSG00000101333.19"/>
</dbReference>
<dbReference type="Ensembl" id="ENST00000688656.1">
    <molecule id="Q15147-1"/>
    <property type="protein sequence ID" value="ENSP00000509912.1"/>
    <property type="gene ID" value="ENSG00000101333.19"/>
</dbReference>
<dbReference type="Ensembl" id="ENST00000689910.1">
    <molecule id="Q15147-1"/>
    <property type="protein sequence ID" value="ENSP00000508650.1"/>
    <property type="gene ID" value="ENSG00000101333.19"/>
</dbReference>
<dbReference type="Ensembl" id="ENST00000693005.1">
    <molecule id="Q15147-1"/>
    <property type="protein sequence ID" value="ENSP00000509597.1"/>
    <property type="gene ID" value="ENSG00000101333.19"/>
</dbReference>
<dbReference type="Ensembl" id="ENST00000693752.1">
    <molecule id="Q15147-4"/>
    <property type="protein sequence ID" value="ENSP00000508677.1"/>
    <property type="gene ID" value="ENSG00000101333.19"/>
</dbReference>
<dbReference type="GeneID" id="5332"/>
<dbReference type="KEGG" id="hsa:5332"/>
<dbReference type="UCSC" id="uc010gbx.4">
    <molecule id="Q15147-1"/>
    <property type="organism name" value="human"/>
</dbReference>
<dbReference type="AGR" id="HGNC:9059"/>
<dbReference type="CTD" id="5332"/>
<dbReference type="DisGeNET" id="5332"/>
<dbReference type="GeneCards" id="PLCB4"/>
<dbReference type="HGNC" id="HGNC:9059">
    <property type="gene designation" value="PLCB4"/>
</dbReference>
<dbReference type="HPA" id="ENSG00000101333">
    <property type="expression patterns" value="Tissue enhanced (brain, salivary gland)"/>
</dbReference>
<dbReference type="MalaCards" id="PLCB4"/>
<dbReference type="MIM" id="600810">
    <property type="type" value="gene"/>
</dbReference>
<dbReference type="MIM" id="614669">
    <property type="type" value="phenotype"/>
</dbReference>
<dbReference type="MIM" id="620458">
    <property type="type" value="phenotype"/>
</dbReference>
<dbReference type="neXtProt" id="NX_Q15147"/>
<dbReference type="OpenTargets" id="ENSG00000101333"/>
<dbReference type="Orphanet" id="137888">
    <property type="disease" value="Auriculocondylar syndrome"/>
</dbReference>
<dbReference type="PharmGKB" id="PA33387"/>
<dbReference type="VEuPathDB" id="HostDB:ENSG00000101333"/>
<dbReference type="eggNOG" id="KOG1265">
    <property type="taxonomic scope" value="Eukaryota"/>
</dbReference>
<dbReference type="GeneTree" id="ENSGT00940000156426"/>
<dbReference type="HOGENOM" id="CLU_002738_2_1_1"/>
<dbReference type="InParanoid" id="Q15147"/>
<dbReference type="OMA" id="AMQKAHC"/>
<dbReference type="OrthoDB" id="269822at2759"/>
<dbReference type="PAN-GO" id="Q15147">
    <property type="GO annotations" value="2 GO annotations based on evolutionary models"/>
</dbReference>
<dbReference type="PhylomeDB" id="Q15147"/>
<dbReference type="TreeFam" id="TF352235"/>
<dbReference type="BRENDA" id="3.1.4.11">
    <property type="organism ID" value="2681"/>
</dbReference>
<dbReference type="PathwayCommons" id="Q15147"/>
<dbReference type="Reactome" id="R-HSA-112043">
    <property type="pathway name" value="PLC beta mediated events"/>
</dbReference>
<dbReference type="Reactome" id="R-HSA-1855204">
    <property type="pathway name" value="Synthesis of IP3 and IP4 in the cytosol"/>
</dbReference>
<dbReference type="Reactome" id="R-HSA-416476">
    <property type="pathway name" value="G alpha (q) signalling events"/>
</dbReference>
<dbReference type="SignaLink" id="Q15147"/>
<dbReference type="BioGRID-ORCS" id="5332">
    <property type="hits" value="7 hits in 1150 CRISPR screens"/>
</dbReference>
<dbReference type="CD-CODE" id="FB4E32DD">
    <property type="entry name" value="Presynaptic clusters and postsynaptic densities"/>
</dbReference>
<dbReference type="ChiTaRS" id="PLCB4">
    <property type="organism name" value="human"/>
</dbReference>
<dbReference type="GeneWiki" id="PLCB4"/>
<dbReference type="GenomeRNAi" id="5332"/>
<dbReference type="Pharos" id="Q15147">
    <property type="development level" value="Tbio"/>
</dbReference>
<dbReference type="PRO" id="PR:Q15147"/>
<dbReference type="Proteomes" id="UP000005640">
    <property type="component" value="Chromosome 20"/>
</dbReference>
<dbReference type="RNAct" id="Q15147">
    <property type="molecule type" value="protein"/>
</dbReference>
<dbReference type="Bgee" id="ENSG00000101333">
    <property type="expression patterns" value="Expressed in parotid gland and 196 other cell types or tissues"/>
</dbReference>
<dbReference type="ExpressionAtlas" id="Q15147">
    <property type="expression patterns" value="baseline and differential"/>
</dbReference>
<dbReference type="GO" id="GO:0005829">
    <property type="term" value="C:cytosol"/>
    <property type="evidence" value="ECO:0000304"/>
    <property type="project" value="Reactome"/>
</dbReference>
<dbReference type="GO" id="GO:0005886">
    <property type="term" value="C:plasma membrane"/>
    <property type="evidence" value="ECO:0000314"/>
    <property type="project" value="UniProtKB"/>
</dbReference>
<dbReference type="GO" id="GO:0005509">
    <property type="term" value="F:calcium ion binding"/>
    <property type="evidence" value="ECO:0007669"/>
    <property type="project" value="InterPro"/>
</dbReference>
<dbReference type="GO" id="GO:0004435">
    <property type="term" value="F:phosphatidylinositol-4,5-bisphosphate phospholipase C activity"/>
    <property type="evidence" value="ECO:0000318"/>
    <property type="project" value="GO_Central"/>
</dbReference>
<dbReference type="GO" id="GO:0004629">
    <property type="term" value="F:phospholipase C activity"/>
    <property type="evidence" value="ECO:0000304"/>
    <property type="project" value="Reactome"/>
</dbReference>
<dbReference type="GO" id="GO:0007186">
    <property type="term" value="P:G protein-coupled receptor signaling pathway"/>
    <property type="evidence" value="ECO:0000304"/>
    <property type="project" value="Reactome"/>
</dbReference>
<dbReference type="GO" id="GO:0016042">
    <property type="term" value="P:lipid catabolic process"/>
    <property type="evidence" value="ECO:0007669"/>
    <property type="project" value="UniProtKB-KW"/>
</dbReference>
<dbReference type="GO" id="GO:0046488">
    <property type="term" value="P:phosphatidylinositol metabolic process"/>
    <property type="evidence" value="ECO:0000318"/>
    <property type="project" value="GO_Central"/>
</dbReference>
<dbReference type="GO" id="GO:0048015">
    <property type="term" value="P:phosphatidylinositol-mediated signaling"/>
    <property type="evidence" value="ECO:0000318"/>
    <property type="project" value="GO_Central"/>
</dbReference>
<dbReference type="GO" id="GO:0160135">
    <property type="term" value="P:phospholipase C-activating endothelin receptor signaling pathway"/>
    <property type="evidence" value="ECO:0000314"/>
    <property type="project" value="UniProtKB"/>
</dbReference>
<dbReference type="GO" id="GO:0051209">
    <property type="term" value="P:release of sequestered calcium ion into cytosol"/>
    <property type="evidence" value="ECO:0000318"/>
    <property type="project" value="GO_Central"/>
</dbReference>
<dbReference type="CDD" id="cd00275">
    <property type="entry name" value="C2_PLC_like"/>
    <property type="match status" value="1"/>
</dbReference>
<dbReference type="CDD" id="cd16211">
    <property type="entry name" value="EFh_PI-PLCbeta4"/>
    <property type="match status" value="1"/>
</dbReference>
<dbReference type="CDD" id="cd13361">
    <property type="entry name" value="PH_PLC_beta"/>
    <property type="match status" value="1"/>
</dbReference>
<dbReference type="CDD" id="cd08591">
    <property type="entry name" value="PI-PLCc_beta"/>
    <property type="match status" value="1"/>
</dbReference>
<dbReference type="FunFam" id="1.10.238.10:FF:000024">
    <property type="entry name" value="1-phosphatidylinositol 4,5-bisphosphate phosphodiesterase"/>
    <property type="match status" value="1"/>
</dbReference>
<dbReference type="FunFam" id="1.20.1230.10:FF:000002">
    <property type="entry name" value="1-phosphatidylinositol 4,5-bisphosphate phosphodiesterase"/>
    <property type="match status" value="1"/>
</dbReference>
<dbReference type="FunFam" id="2.30.29.240:FF:000001">
    <property type="entry name" value="1-phosphatidylinositol 4,5-bisphosphate phosphodiesterase"/>
    <property type="match status" value="1"/>
</dbReference>
<dbReference type="FunFam" id="2.60.40.150:FF:000008">
    <property type="entry name" value="1-phosphatidylinositol 4,5-bisphosphate phosphodiesterase"/>
    <property type="match status" value="1"/>
</dbReference>
<dbReference type="Gene3D" id="2.30.29.240">
    <property type="match status" value="1"/>
</dbReference>
<dbReference type="Gene3D" id="2.60.40.150">
    <property type="entry name" value="C2 domain"/>
    <property type="match status" value="1"/>
</dbReference>
<dbReference type="Gene3D" id="1.10.238.10">
    <property type="entry name" value="EF-hand"/>
    <property type="match status" value="1"/>
</dbReference>
<dbReference type="Gene3D" id="3.20.20.190">
    <property type="entry name" value="Phosphatidylinositol (PI) phosphodiesterase"/>
    <property type="match status" value="1"/>
</dbReference>
<dbReference type="Gene3D" id="1.20.1230.10">
    <property type="entry name" value="Phospholipase C beta, distal C-terminal domain"/>
    <property type="match status" value="1"/>
</dbReference>
<dbReference type="InterPro" id="IPR000008">
    <property type="entry name" value="C2_dom"/>
</dbReference>
<dbReference type="InterPro" id="IPR035892">
    <property type="entry name" value="C2_domain_sf"/>
</dbReference>
<dbReference type="InterPro" id="IPR011992">
    <property type="entry name" value="EF-hand-dom_pair"/>
</dbReference>
<dbReference type="InterPro" id="IPR001192">
    <property type="entry name" value="PI-PLC_fam"/>
</dbReference>
<dbReference type="InterPro" id="IPR016280">
    <property type="entry name" value="PLC-beta"/>
</dbReference>
<dbReference type="InterPro" id="IPR014815">
    <property type="entry name" value="PLC-beta_C"/>
</dbReference>
<dbReference type="InterPro" id="IPR042531">
    <property type="entry name" value="PLC-beta_C_sf"/>
</dbReference>
<dbReference type="InterPro" id="IPR037862">
    <property type="entry name" value="PLC-beta_PH"/>
</dbReference>
<dbReference type="InterPro" id="IPR017946">
    <property type="entry name" value="PLC-like_Pdiesterase_TIM-brl"/>
</dbReference>
<dbReference type="InterPro" id="IPR053945">
    <property type="entry name" value="PLCB1-4-like_EFh"/>
</dbReference>
<dbReference type="InterPro" id="IPR000909">
    <property type="entry name" value="PLipase_C_PInositol-sp_X_dom"/>
</dbReference>
<dbReference type="InterPro" id="IPR001711">
    <property type="entry name" value="PLipase_C_Pinositol-sp_Y"/>
</dbReference>
<dbReference type="PANTHER" id="PTHR10336:SF36">
    <property type="entry name" value="1-PHOSPHATIDYLINOSITOL 4,5-BISPHOSPHATE PHOSPHODIESTERASE BETA-4"/>
    <property type="match status" value="1"/>
</dbReference>
<dbReference type="PANTHER" id="PTHR10336">
    <property type="entry name" value="PHOSPHOINOSITIDE-SPECIFIC PHOSPHOLIPASE C FAMILY PROTEIN"/>
    <property type="match status" value="1"/>
</dbReference>
<dbReference type="Pfam" id="PF00168">
    <property type="entry name" value="C2"/>
    <property type="match status" value="1"/>
</dbReference>
<dbReference type="Pfam" id="PF17787">
    <property type="entry name" value="PH_14"/>
    <property type="match status" value="1"/>
</dbReference>
<dbReference type="Pfam" id="PF00388">
    <property type="entry name" value="PI-PLC-X"/>
    <property type="match status" value="1"/>
</dbReference>
<dbReference type="Pfam" id="PF00387">
    <property type="entry name" value="PI-PLC-Y"/>
    <property type="match status" value="1"/>
</dbReference>
<dbReference type="Pfam" id="PF08703">
    <property type="entry name" value="PLC-beta_C"/>
    <property type="match status" value="1"/>
</dbReference>
<dbReference type="Pfam" id="PF22631">
    <property type="entry name" value="PLCB1-4-like_EFh"/>
    <property type="match status" value="1"/>
</dbReference>
<dbReference type="PIRSF" id="PIRSF000956">
    <property type="entry name" value="PLC-beta"/>
    <property type="match status" value="1"/>
</dbReference>
<dbReference type="PRINTS" id="PR00390">
    <property type="entry name" value="PHPHLIPASEC"/>
</dbReference>
<dbReference type="SMART" id="SM00239">
    <property type="entry name" value="C2"/>
    <property type="match status" value="1"/>
</dbReference>
<dbReference type="SMART" id="SM00148">
    <property type="entry name" value="PLCXc"/>
    <property type="match status" value="1"/>
</dbReference>
<dbReference type="SMART" id="SM00149">
    <property type="entry name" value="PLCYc"/>
    <property type="match status" value="1"/>
</dbReference>
<dbReference type="SUPFAM" id="SSF69989">
    <property type="entry name" value="C-terminal domain of PLC-beta"/>
    <property type="match status" value="1"/>
</dbReference>
<dbReference type="SUPFAM" id="SSF49562">
    <property type="entry name" value="C2 domain (Calcium/lipid-binding domain, CaLB)"/>
    <property type="match status" value="1"/>
</dbReference>
<dbReference type="SUPFAM" id="SSF47473">
    <property type="entry name" value="EF-hand"/>
    <property type="match status" value="1"/>
</dbReference>
<dbReference type="SUPFAM" id="SSF50729">
    <property type="entry name" value="PH domain-like"/>
    <property type="match status" value="1"/>
</dbReference>
<dbReference type="SUPFAM" id="SSF51695">
    <property type="entry name" value="PLC-like phosphodiesterases"/>
    <property type="match status" value="1"/>
</dbReference>
<dbReference type="PROSITE" id="PS50004">
    <property type="entry name" value="C2"/>
    <property type="match status" value="1"/>
</dbReference>
<dbReference type="PROSITE" id="PS50007">
    <property type="entry name" value="PIPLC_X_DOMAIN"/>
    <property type="match status" value="1"/>
</dbReference>
<dbReference type="PROSITE" id="PS50008">
    <property type="entry name" value="PIPLC_Y_DOMAIN"/>
    <property type="match status" value="1"/>
</dbReference>